<accession>A4WGH3</accession>
<sequence length="85" mass="9367">MAPPLSPGSRVLIGLIRVYQRLISPLLGPHCRFTPTCSSYGIEALRRFGVIKGSWLTVKRVLKCHPLHPGGDDPVPPGPFDTREH</sequence>
<dbReference type="EMBL" id="CP000653">
    <property type="protein sequence ID" value="ABP62803.1"/>
    <property type="molecule type" value="Genomic_DNA"/>
</dbReference>
<dbReference type="STRING" id="399742.Ent638_4150"/>
<dbReference type="KEGG" id="ent:Ent638_4150"/>
<dbReference type="eggNOG" id="COG0759">
    <property type="taxonomic scope" value="Bacteria"/>
</dbReference>
<dbReference type="HOGENOM" id="CLU_144811_5_2_6"/>
<dbReference type="OrthoDB" id="9801753at2"/>
<dbReference type="Proteomes" id="UP000000230">
    <property type="component" value="Chromosome"/>
</dbReference>
<dbReference type="GO" id="GO:0005886">
    <property type="term" value="C:plasma membrane"/>
    <property type="evidence" value="ECO:0007669"/>
    <property type="project" value="UniProtKB-SubCell"/>
</dbReference>
<dbReference type="HAMAP" id="MF_00386">
    <property type="entry name" value="UPF0161_YidD"/>
    <property type="match status" value="1"/>
</dbReference>
<dbReference type="InterPro" id="IPR002696">
    <property type="entry name" value="Membr_insert_effic_factor_YidD"/>
</dbReference>
<dbReference type="NCBIfam" id="TIGR00278">
    <property type="entry name" value="membrane protein insertion efficiency factor YidD"/>
    <property type="match status" value="1"/>
</dbReference>
<dbReference type="PANTHER" id="PTHR33383">
    <property type="entry name" value="MEMBRANE PROTEIN INSERTION EFFICIENCY FACTOR-RELATED"/>
    <property type="match status" value="1"/>
</dbReference>
<dbReference type="PANTHER" id="PTHR33383:SF1">
    <property type="entry name" value="MEMBRANE PROTEIN INSERTION EFFICIENCY FACTOR-RELATED"/>
    <property type="match status" value="1"/>
</dbReference>
<dbReference type="Pfam" id="PF01809">
    <property type="entry name" value="YidD"/>
    <property type="match status" value="1"/>
</dbReference>
<dbReference type="SMART" id="SM01234">
    <property type="entry name" value="Haemolytic"/>
    <property type="match status" value="1"/>
</dbReference>
<organism>
    <name type="scientific">Enterobacter sp. (strain 638)</name>
    <dbReference type="NCBI Taxonomy" id="399742"/>
    <lineage>
        <taxon>Bacteria</taxon>
        <taxon>Pseudomonadati</taxon>
        <taxon>Pseudomonadota</taxon>
        <taxon>Gammaproteobacteria</taxon>
        <taxon>Enterobacterales</taxon>
        <taxon>Enterobacteriaceae</taxon>
        <taxon>Enterobacter</taxon>
    </lineage>
</organism>
<evidence type="ECO:0000255" key="1">
    <source>
        <dbReference type="HAMAP-Rule" id="MF_00386"/>
    </source>
</evidence>
<reference key="1">
    <citation type="journal article" date="2010" name="PLoS Genet.">
        <title>Genome sequence of the plant growth promoting endophytic bacterium Enterobacter sp. 638.</title>
        <authorList>
            <person name="Taghavi S."/>
            <person name="van der Lelie D."/>
            <person name="Hoffman A."/>
            <person name="Zhang Y.B."/>
            <person name="Walla M.D."/>
            <person name="Vangronsveld J."/>
            <person name="Newman L."/>
            <person name="Monchy S."/>
        </authorList>
    </citation>
    <scope>NUCLEOTIDE SEQUENCE [LARGE SCALE GENOMIC DNA]</scope>
    <source>
        <strain>638</strain>
    </source>
</reference>
<keyword id="KW-0997">Cell inner membrane</keyword>
<keyword id="KW-1003">Cell membrane</keyword>
<keyword id="KW-0472">Membrane</keyword>
<comment type="function">
    <text evidence="1">Could be involved in insertion of integral membrane proteins into the membrane.</text>
</comment>
<comment type="subcellular location">
    <subcellularLocation>
        <location evidence="1">Cell inner membrane</location>
        <topology evidence="1">Peripheral membrane protein</topology>
        <orientation evidence="1">Cytoplasmic side</orientation>
    </subcellularLocation>
</comment>
<comment type="similarity">
    <text evidence="1">Belongs to the UPF0161 family.</text>
</comment>
<name>YIDD_ENT38</name>
<gene>
    <name type="ordered locus">Ent638_4150</name>
</gene>
<protein>
    <recommendedName>
        <fullName evidence="1">Putative membrane protein insertion efficiency factor</fullName>
    </recommendedName>
</protein>
<proteinExistence type="inferred from homology"/>
<feature type="chain" id="PRO_1000060722" description="Putative membrane protein insertion efficiency factor">
    <location>
        <begin position="1"/>
        <end position="85"/>
    </location>
</feature>